<evidence type="ECO:0000255" key="1">
    <source>
        <dbReference type="HAMAP-Rule" id="MF_01694"/>
    </source>
</evidence>
<evidence type="ECO:0000255" key="2">
    <source>
        <dbReference type="PROSITE-ProRule" id="PRU01266"/>
    </source>
</evidence>
<evidence type="ECO:0000256" key="3">
    <source>
        <dbReference type="SAM" id="MobiDB-lite"/>
    </source>
</evidence>
<dbReference type="EC" id="2.8.1.6" evidence="1"/>
<dbReference type="EMBL" id="CP000250">
    <property type="protein sequence ID" value="ABD08027.1"/>
    <property type="molecule type" value="Genomic_DNA"/>
</dbReference>
<dbReference type="RefSeq" id="WP_011442211.1">
    <property type="nucleotide sequence ID" value="NC_007778.1"/>
</dbReference>
<dbReference type="SMR" id="Q2IUT3"/>
<dbReference type="STRING" id="316058.RPB_3331"/>
<dbReference type="KEGG" id="rpb:RPB_3331"/>
<dbReference type="eggNOG" id="COG0502">
    <property type="taxonomic scope" value="Bacteria"/>
</dbReference>
<dbReference type="HOGENOM" id="CLU_033172_1_2_5"/>
<dbReference type="OrthoDB" id="9786826at2"/>
<dbReference type="UniPathway" id="UPA00078">
    <property type="reaction ID" value="UER00162"/>
</dbReference>
<dbReference type="Proteomes" id="UP000008809">
    <property type="component" value="Chromosome"/>
</dbReference>
<dbReference type="GO" id="GO:0051537">
    <property type="term" value="F:2 iron, 2 sulfur cluster binding"/>
    <property type="evidence" value="ECO:0007669"/>
    <property type="project" value="UniProtKB-KW"/>
</dbReference>
<dbReference type="GO" id="GO:0051539">
    <property type="term" value="F:4 iron, 4 sulfur cluster binding"/>
    <property type="evidence" value="ECO:0007669"/>
    <property type="project" value="UniProtKB-KW"/>
</dbReference>
<dbReference type="GO" id="GO:0004076">
    <property type="term" value="F:biotin synthase activity"/>
    <property type="evidence" value="ECO:0007669"/>
    <property type="project" value="UniProtKB-UniRule"/>
</dbReference>
<dbReference type="GO" id="GO:0005506">
    <property type="term" value="F:iron ion binding"/>
    <property type="evidence" value="ECO:0007669"/>
    <property type="project" value="UniProtKB-UniRule"/>
</dbReference>
<dbReference type="GO" id="GO:0009102">
    <property type="term" value="P:biotin biosynthetic process"/>
    <property type="evidence" value="ECO:0007669"/>
    <property type="project" value="UniProtKB-UniRule"/>
</dbReference>
<dbReference type="CDD" id="cd01335">
    <property type="entry name" value="Radical_SAM"/>
    <property type="match status" value="1"/>
</dbReference>
<dbReference type="FunFam" id="3.20.20.70:FF:000011">
    <property type="entry name" value="Biotin synthase"/>
    <property type="match status" value="1"/>
</dbReference>
<dbReference type="Gene3D" id="3.20.20.70">
    <property type="entry name" value="Aldolase class I"/>
    <property type="match status" value="1"/>
</dbReference>
<dbReference type="HAMAP" id="MF_01694">
    <property type="entry name" value="BioB"/>
    <property type="match status" value="1"/>
</dbReference>
<dbReference type="InterPro" id="IPR013785">
    <property type="entry name" value="Aldolase_TIM"/>
</dbReference>
<dbReference type="InterPro" id="IPR010722">
    <property type="entry name" value="BATS_dom"/>
</dbReference>
<dbReference type="InterPro" id="IPR002684">
    <property type="entry name" value="Biotin_synth/BioAB"/>
</dbReference>
<dbReference type="InterPro" id="IPR024177">
    <property type="entry name" value="Biotin_synthase"/>
</dbReference>
<dbReference type="InterPro" id="IPR006638">
    <property type="entry name" value="Elp3/MiaA/NifB-like_rSAM"/>
</dbReference>
<dbReference type="InterPro" id="IPR007197">
    <property type="entry name" value="rSAM"/>
</dbReference>
<dbReference type="NCBIfam" id="TIGR00433">
    <property type="entry name" value="bioB"/>
    <property type="match status" value="1"/>
</dbReference>
<dbReference type="PANTHER" id="PTHR22976">
    <property type="entry name" value="BIOTIN SYNTHASE"/>
    <property type="match status" value="1"/>
</dbReference>
<dbReference type="PANTHER" id="PTHR22976:SF2">
    <property type="entry name" value="BIOTIN SYNTHASE, MITOCHONDRIAL"/>
    <property type="match status" value="1"/>
</dbReference>
<dbReference type="Pfam" id="PF06968">
    <property type="entry name" value="BATS"/>
    <property type="match status" value="1"/>
</dbReference>
<dbReference type="Pfam" id="PF04055">
    <property type="entry name" value="Radical_SAM"/>
    <property type="match status" value="1"/>
</dbReference>
<dbReference type="PIRSF" id="PIRSF001619">
    <property type="entry name" value="Biotin_synth"/>
    <property type="match status" value="1"/>
</dbReference>
<dbReference type="SFLD" id="SFLDF00272">
    <property type="entry name" value="biotin_synthase"/>
    <property type="match status" value="1"/>
</dbReference>
<dbReference type="SFLD" id="SFLDS00029">
    <property type="entry name" value="Radical_SAM"/>
    <property type="match status" value="1"/>
</dbReference>
<dbReference type="SMART" id="SM00876">
    <property type="entry name" value="BATS"/>
    <property type="match status" value="1"/>
</dbReference>
<dbReference type="SMART" id="SM00729">
    <property type="entry name" value="Elp3"/>
    <property type="match status" value="1"/>
</dbReference>
<dbReference type="SUPFAM" id="SSF102114">
    <property type="entry name" value="Radical SAM enzymes"/>
    <property type="match status" value="1"/>
</dbReference>
<dbReference type="PROSITE" id="PS51918">
    <property type="entry name" value="RADICAL_SAM"/>
    <property type="match status" value="1"/>
</dbReference>
<reference key="1">
    <citation type="submission" date="2006-01" db="EMBL/GenBank/DDBJ databases">
        <title>Complete sequence of Rhodopseudomonas palustris HaA2.</title>
        <authorList>
            <consortium name="US DOE Joint Genome Institute"/>
            <person name="Copeland A."/>
            <person name="Lucas S."/>
            <person name="Lapidus A."/>
            <person name="Barry K."/>
            <person name="Detter J.C."/>
            <person name="Glavina T."/>
            <person name="Hammon N."/>
            <person name="Israni S."/>
            <person name="Pitluck S."/>
            <person name="Chain P."/>
            <person name="Malfatti S."/>
            <person name="Shin M."/>
            <person name="Vergez L."/>
            <person name="Schmutz J."/>
            <person name="Larimer F."/>
            <person name="Land M."/>
            <person name="Hauser L."/>
            <person name="Pelletier D.A."/>
            <person name="Kyrpides N."/>
            <person name="Anderson I."/>
            <person name="Oda Y."/>
            <person name="Harwood C.S."/>
            <person name="Richardson P."/>
        </authorList>
    </citation>
    <scope>NUCLEOTIDE SEQUENCE [LARGE SCALE GENOMIC DNA]</scope>
    <source>
        <strain>HaA2</strain>
    </source>
</reference>
<feature type="chain" id="PRO_0000381580" description="Biotin synthase">
    <location>
        <begin position="1"/>
        <end position="353"/>
    </location>
</feature>
<feature type="domain" description="Radical SAM core" evidence="2">
    <location>
        <begin position="51"/>
        <end position="270"/>
    </location>
</feature>
<feature type="region of interest" description="Disordered" evidence="3">
    <location>
        <begin position="330"/>
        <end position="353"/>
    </location>
</feature>
<feature type="compositionally biased region" description="Basic and acidic residues" evidence="3">
    <location>
        <begin position="334"/>
        <end position="343"/>
    </location>
</feature>
<feature type="compositionally biased region" description="Basic residues" evidence="3">
    <location>
        <begin position="344"/>
        <end position="353"/>
    </location>
</feature>
<feature type="binding site" evidence="1">
    <location>
        <position position="66"/>
    </location>
    <ligand>
        <name>[4Fe-4S] cluster</name>
        <dbReference type="ChEBI" id="CHEBI:49883"/>
        <note>4Fe-4S-S-AdoMet</note>
    </ligand>
</feature>
<feature type="binding site" evidence="1">
    <location>
        <position position="70"/>
    </location>
    <ligand>
        <name>[4Fe-4S] cluster</name>
        <dbReference type="ChEBI" id="CHEBI:49883"/>
        <note>4Fe-4S-S-AdoMet</note>
    </ligand>
</feature>
<feature type="binding site" evidence="1">
    <location>
        <position position="73"/>
    </location>
    <ligand>
        <name>[4Fe-4S] cluster</name>
        <dbReference type="ChEBI" id="CHEBI:49883"/>
        <note>4Fe-4S-S-AdoMet</note>
    </ligand>
</feature>
<feature type="binding site" evidence="1">
    <location>
        <position position="110"/>
    </location>
    <ligand>
        <name>[2Fe-2S] cluster</name>
        <dbReference type="ChEBI" id="CHEBI:190135"/>
    </ligand>
</feature>
<feature type="binding site" evidence="1">
    <location>
        <position position="141"/>
    </location>
    <ligand>
        <name>[2Fe-2S] cluster</name>
        <dbReference type="ChEBI" id="CHEBI:190135"/>
    </ligand>
</feature>
<feature type="binding site" evidence="1">
    <location>
        <position position="201"/>
    </location>
    <ligand>
        <name>[2Fe-2S] cluster</name>
        <dbReference type="ChEBI" id="CHEBI:190135"/>
    </ligand>
</feature>
<feature type="binding site" evidence="1">
    <location>
        <position position="274"/>
    </location>
    <ligand>
        <name>[2Fe-2S] cluster</name>
        <dbReference type="ChEBI" id="CHEBI:190135"/>
    </ligand>
</feature>
<sequence>MNSIDLASLAAATPTLRHDWTREQAAAIYNLPFADLIFRAQTIHRQSFDANEVQCNQLLNVKTGGCAEDCGYCSQSAHHDTALPASKLMDPKKVIEGAKAARDAGATRYCMGAAWRSPKDRDMAPVIEMVKGVKALGMEACMTLGMLTDDQAQQLADAGLDYYNHNIDTSEEFYSSVVKSRSFGDRLDTLATVQDAGIKVCCGGILGLGEKPTDRVEMLRTLANLPQHPESVPINMLIPIEGTPIAKTAKPVDPFEFVRTIALARIMMPKSDVRLAAGRTAMSDEMQSLCFLAGANSIFIGDTLLTTPNPGDSKDRMLFARLGITPREGAPVEAHSHDHDHDHHDHHHGHSHS</sequence>
<proteinExistence type="inferred from homology"/>
<name>BIOB_RHOP2</name>
<organism>
    <name type="scientific">Rhodopseudomonas palustris (strain HaA2)</name>
    <dbReference type="NCBI Taxonomy" id="316058"/>
    <lineage>
        <taxon>Bacteria</taxon>
        <taxon>Pseudomonadati</taxon>
        <taxon>Pseudomonadota</taxon>
        <taxon>Alphaproteobacteria</taxon>
        <taxon>Hyphomicrobiales</taxon>
        <taxon>Nitrobacteraceae</taxon>
        <taxon>Rhodopseudomonas</taxon>
    </lineage>
</organism>
<comment type="function">
    <text evidence="1">Catalyzes the conversion of dethiobiotin (DTB) to biotin by the insertion of a sulfur atom into dethiobiotin via a radical-based mechanism.</text>
</comment>
<comment type="catalytic activity">
    <reaction evidence="1">
        <text>(4R,5S)-dethiobiotin + (sulfur carrier)-SH + 2 reduced [2Fe-2S]-[ferredoxin] + 2 S-adenosyl-L-methionine = (sulfur carrier)-H + biotin + 2 5'-deoxyadenosine + 2 L-methionine + 2 oxidized [2Fe-2S]-[ferredoxin]</text>
        <dbReference type="Rhea" id="RHEA:22060"/>
        <dbReference type="Rhea" id="RHEA-COMP:10000"/>
        <dbReference type="Rhea" id="RHEA-COMP:10001"/>
        <dbReference type="Rhea" id="RHEA-COMP:14737"/>
        <dbReference type="Rhea" id="RHEA-COMP:14739"/>
        <dbReference type="ChEBI" id="CHEBI:17319"/>
        <dbReference type="ChEBI" id="CHEBI:29917"/>
        <dbReference type="ChEBI" id="CHEBI:33737"/>
        <dbReference type="ChEBI" id="CHEBI:33738"/>
        <dbReference type="ChEBI" id="CHEBI:57586"/>
        <dbReference type="ChEBI" id="CHEBI:57844"/>
        <dbReference type="ChEBI" id="CHEBI:59789"/>
        <dbReference type="ChEBI" id="CHEBI:64428"/>
        <dbReference type="ChEBI" id="CHEBI:149473"/>
        <dbReference type="EC" id="2.8.1.6"/>
    </reaction>
</comment>
<comment type="cofactor">
    <cofactor evidence="1">
        <name>[4Fe-4S] cluster</name>
        <dbReference type="ChEBI" id="CHEBI:49883"/>
    </cofactor>
    <text evidence="1">Binds 1 [4Fe-4S] cluster. The cluster is coordinated with 3 cysteines and an exchangeable S-adenosyl-L-methionine.</text>
</comment>
<comment type="cofactor">
    <cofactor evidence="1">
        <name>[2Fe-2S] cluster</name>
        <dbReference type="ChEBI" id="CHEBI:190135"/>
    </cofactor>
    <text evidence="1">Binds 1 [2Fe-2S] cluster. The cluster is coordinated with 3 cysteines and 1 arginine.</text>
</comment>
<comment type="pathway">
    <text evidence="1">Cofactor biosynthesis; biotin biosynthesis; biotin from 7,8-diaminononanoate: step 2/2.</text>
</comment>
<comment type="subunit">
    <text evidence="1">Homodimer.</text>
</comment>
<comment type="similarity">
    <text evidence="1">Belongs to the radical SAM superfamily. Biotin synthase family.</text>
</comment>
<gene>
    <name evidence="1" type="primary">bioB</name>
    <name type="ordered locus">RPB_3331</name>
</gene>
<protein>
    <recommendedName>
        <fullName evidence="1">Biotin synthase</fullName>
        <ecNumber evidence="1">2.8.1.6</ecNumber>
    </recommendedName>
</protein>
<accession>Q2IUT3</accession>
<keyword id="KW-0001">2Fe-2S</keyword>
<keyword id="KW-0004">4Fe-4S</keyword>
<keyword id="KW-0093">Biotin biosynthesis</keyword>
<keyword id="KW-0408">Iron</keyword>
<keyword id="KW-0411">Iron-sulfur</keyword>
<keyword id="KW-0479">Metal-binding</keyword>
<keyword id="KW-1185">Reference proteome</keyword>
<keyword id="KW-0949">S-adenosyl-L-methionine</keyword>
<keyword id="KW-0808">Transferase</keyword>